<accession>P0DA91</accession>
<accession>Q8K8J8</accession>
<reference key="1">
    <citation type="journal article" date="2003" name="Genome Res.">
        <title>Genome sequence of an M3 strain of Streptococcus pyogenes reveals a large-scale genomic rearrangement in invasive strains and new insights into phage evolution.</title>
        <authorList>
            <person name="Nakagawa I."/>
            <person name="Kurokawa K."/>
            <person name="Yamashita A."/>
            <person name="Nakata M."/>
            <person name="Tomiyasu Y."/>
            <person name="Okahashi N."/>
            <person name="Kawabata S."/>
            <person name="Yamazaki K."/>
            <person name="Shiba T."/>
            <person name="Yasunaga T."/>
            <person name="Hayashi H."/>
            <person name="Hattori M."/>
            <person name="Hamada S."/>
        </authorList>
    </citation>
    <scope>NUCLEOTIDE SEQUENCE [LARGE SCALE GENOMIC DNA]</scope>
    <source>
        <strain>SSI-1</strain>
    </source>
</reference>
<evidence type="ECO:0000255" key="1">
    <source>
        <dbReference type="HAMAP-Rule" id="MF_00195"/>
    </source>
</evidence>
<name>DER_STRPQ</name>
<comment type="function">
    <text evidence="1">GTPase that plays an essential role in the late steps of ribosome biogenesis.</text>
</comment>
<comment type="subunit">
    <text evidence="1">Associates with the 50S ribosomal subunit.</text>
</comment>
<comment type="similarity">
    <text evidence="1">Belongs to the TRAFAC class TrmE-Era-EngA-EngB-Septin-like GTPase superfamily. EngA (Der) GTPase family.</text>
</comment>
<proteinExistence type="inferred from homology"/>
<sequence>MVLPTVAIVGRPNVGKSTLFNRIAGERISIVEDVEGVTRDRIYATGEWLNRQFSLIDTGGIDDVDAPFMEQIKHQAQIAMEEADVIVFVVSGKEGVTDADEYVSKILYRTNTPVILAVNKVDNPEMRNDIYDFYSLGLGDPYPVSSVHGIGTGDVLDAIVENLPVEEAEENDDIIRFSLIGRPNVGKSSLINAILGEDRVIASPVAGTTRDAIDTHFTDADGQEFTMIDTAGMRKSGKIYENTEKYSVMRAMRAIDRSDVVLMVINAEEGIREYDKRIAGFAHEAGKGMIIVVNKWDAIDKDNHTVAKWEADIRDQFQFLTYAPIIFVSALTKQRLNKLPDLIKRISESQNKRIPSAVLNDVIMDAIAINPTPTDKGKRLKIFYATQVSVKPPTFVVFVNEEELMHFSYLRFLENQIRAAFTFEGTPIHLIARKRK</sequence>
<organism>
    <name type="scientific">Streptococcus pyogenes serotype M3 (strain SSI-1)</name>
    <dbReference type="NCBI Taxonomy" id="193567"/>
    <lineage>
        <taxon>Bacteria</taxon>
        <taxon>Bacillati</taxon>
        <taxon>Bacillota</taxon>
        <taxon>Bacilli</taxon>
        <taxon>Lactobacillales</taxon>
        <taxon>Streptococcaceae</taxon>
        <taxon>Streptococcus</taxon>
    </lineage>
</organism>
<protein>
    <recommendedName>
        <fullName evidence="1">GTPase Der</fullName>
    </recommendedName>
    <alternativeName>
        <fullName evidence="1">GTP-binding protein EngA</fullName>
    </alternativeName>
</protein>
<dbReference type="EMBL" id="BA000034">
    <property type="protein sequence ID" value="BAC64705.1"/>
    <property type="molecule type" value="Genomic_DNA"/>
</dbReference>
<dbReference type="RefSeq" id="WP_011054203.1">
    <property type="nucleotide sequence ID" value="NC_004606.1"/>
</dbReference>
<dbReference type="SMR" id="P0DA91"/>
<dbReference type="KEGG" id="sps:SPs1610"/>
<dbReference type="HOGENOM" id="CLU_016077_6_2_9"/>
<dbReference type="GO" id="GO:0005525">
    <property type="term" value="F:GTP binding"/>
    <property type="evidence" value="ECO:0007669"/>
    <property type="project" value="UniProtKB-UniRule"/>
</dbReference>
<dbReference type="GO" id="GO:0043022">
    <property type="term" value="F:ribosome binding"/>
    <property type="evidence" value="ECO:0007669"/>
    <property type="project" value="TreeGrafter"/>
</dbReference>
<dbReference type="GO" id="GO:0042254">
    <property type="term" value="P:ribosome biogenesis"/>
    <property type="evidence" value="ECO:0007669"/>
    <property type="project" value="UniProtKB-KW"/>
</dbReference>
<dbReference type="CDD" id="cd01894">
    <property type="entry name" value="EngA1"/>
    <property type="match status" value="1"/>
</dbReference>
<dbReference type="CDD" id="cd01895">
    <property type="entry name" value="EngA2"/>
    <property type="match status" value="1"/>
</dbReference>
<dbReference type="FunFam" id="3.30.300.20:FF:000004">
    <property type="entry name" value="GTPase Der"/>
    <property type="match status" value="1"/>
</dbReference>
<dbReference type="FunFam" id="3.40.50.300:FF:000040">
    <property type="entry name" value="GTPase Der"/>
    <property type="match status" value="1"/>
</dbReference>
<dbReference type="FunFam" id="3.40.50.300:FF:000057">
    <property type="entry name" value="GTPase Der"/>
    <property type="match status" value="1"/>
</dbReference>
<dbReference type="Gene3D" id="3.30.300.20">
    <property type="match status" value="1"/>
</dbReference>
<dbReference type="Gene3D" id="3.40.50.300">
    <property type="entry name" value="P-loop containing nucleotide triphosphate hydrolases"/>
    <property type="match status" value="2"/>
</dbReference>
<dbReference type="HAMAP" id="MF_00195">
    <property type="entry name" value="GTPase_Der"/>
    <property type="match status" value="1"/>
</dbReference>
<dbReference type="InterPro" id="IPR031166">
    <property type="entry name" value="G_ENGA"/>
</dbReference>
<dbReference type="InterPro" id="IPR006073">
    <property type="entry name" value="GTP-bd"/>
</dbReference>
<dbReference type="InterPro" id="IPR016484">
    <property type="entry name" value="GTPase_Der"/>
</dbReference>
<dbReference type="InterPro" id="IPR032859">
    <property type="entry name" value="KH_dom-like"/>
</dbReference>
<dbReference type="InterPro" id="IPR015946">
    <property type="entry name" value="KH_dom-like_a/b"/>
</dbReference>
<dbReference type="InterPro" id="IPR027417">
    <property type="entry name" value="P-loop_NTPase"/>
</dbReference>
<dbReference type="InterPro" id="IPR005225">
    <property type="entry name" value="Small_GTP-bd"/>
</dbReference>
<dbReference type="NCBIfam" id="TIGR03594">
    <property type="entry name" value="GTPase_EngA"/>
    <property type="match status" value="1"/>
</dbReference>
<dbReference type="NCBIfam" id="TIGR00231">
    <property type="entry name" value="small_GTP"/>
    <property type="match status" value="2"/>
</dbReference>
<dbReference type="PANTHER" id="PTHR43834">
    <property type="entry name" value="GTPASE DER"/>
    <property type="match status" value="1"/>
</dbReference>
<dbReference type="PANTHER" id="PTHR43834:SF6">
    <property type="entry name" value="GTPASE DER"/>
    <property type="match status" value="1"/>
</dbReference>
<dbReference type="Pfam" id="PF14714">
    <property type="entry name" value="KH_dom-like"/>
    <property type="match status" value="1"/>
</dbReference>
<dbReference type="Pfam" id="PF01926">
    <property type="entry name" value="MMR_HSR1"/>
    <property type="match status" value="2"/>
</dbReference>
<dbReference type="PIRSF" id="PIRSF006485">
    <property type="entry name" value="GTP-binding_EngA"/>
    <property type="match status" value="1"/>
</dbReference>
<dbReference type="PRINTS" id="PR00326">
    <property type="entry name" value="GTP1OBG"/>
</dbReference>
<dbReference type="SUPFAM" id="SSF52540">
    <property type="entry name" value="P-loop containing nucleoside triphosphate hydrolases"/>
    <property type="match status" value="2"/>
</dbReference>
<dbReference type="PROSITE" id="PS51712">
    <property type="entry name" value="G_ENGA"/>
    <property type="match status" value="2"/>
</dbReference>
<feature type="chain" id="PRO_0000411333" description="GTPase Der">
    <location>
        <begin position="1"/>
        <end position="436"/>
    </location>
</feature>
<feature type="domain" description="EngA-type G 1">
    <location>
        <begin position="4"/>
        <end position="167"/>
    </location>
</feature>
<feature type="domain" description="EngA-type G 2">
    <location>
        <begin position="175"/>
        <end position="351"/>
    </location>
</feature>
<feature type="domain" description="KH-like" evidence="1">
    <location>
        <begin position="352"/>
        <end position="436"/>
    </location>
</feature>
<feature type="binding site" evidence="1">
    <location>
        <begin position="10"/>
        <end position="17"/>
    </location>
    <ligand>
        <name>GTP</name>
        <dbReference type="ChEBI" id="CHEBI:37565"/>
        <label>1</label>
    </ligand>
</feature>
<feature type="binding site" evidence="1">
    <location>
        <begin position="57"/>
        <end position="61"/>
    </location>
    <ligand>
        <name>GTP</name>
        <dbReference type="ChEBI" id="CHEBI:37565"/>
        <label>1</label>
    </ligand>
</feature>
<feature type="binding site" evidence="1">
    <location>
        <begin position="119"/>
        <end position="122"/>
    </location>
    <ligand>
        <name>GTP</name>
        <dbReference type="ChEBI" id="CHEBI:37565"/>
        <label>1</label>
    </ligand>
</feature>
<feature type="binding site" evidence="1">
    <location>
        <begin position="181"/>
        <end position="188"/>
    </location>
    <ligand>
        <name>GTP</name>
        <dbReference type="ChEBI" id="CHEBI:37565"/>
        <label>2</label>
    </ligand>
</feature>
<feature type="binding site" evidence="1">
    <location>
        <begin position="229"/>
        <end position="233"/>
    </location>
    <ligand>
        <name>GTP</name>
        <dbReference type="ChEBI" id="CHEBI:37565"/>
        <label>2</label>
    </ligand>
</feature>
<feature type="binding site" evidence="1">
    <location>
        <begin position="294"/>
        <end position="297"/>
    </location>
    <ligand>
        <name>GTP</name>
        <dbReference type="ChEBI" id="CHEBI:37565"/>
        <label>2</label>
    </ligand>
</feature>
<keyword id="KW-0342">GTP-binding</keyword>
<keyword id="KW-0547">Nucleotide-binding</keyword>
<keyword id="KW-0677">Repeat</keyword>
<keyword id="KW-0690">Ribosome biogenesis</keyword>
<gene>
    <name evidence="1" type="primary">der</name>
    <name type="synonym">engA</name>
    <name type="synonym">pgdA</name>
    <name type="ordered locus">SPs1610</name>
</gene>